<reference key="1">
    <citation type="submission" date="2006-01" db="EMBL/GenBank/DDBJ databases">
        <title>Complete sequence of Novosphingobium aromaticivorans DSM 12444.</title>
        <authorList>
            <consortium name="US DOE Joint Genome Institute"/>
            <person name="Copeland A."/>
            <person name="Lucas S."/>
            <person name="Lapidus A."/>
            <person name="Barry K."/>
            <person name="Detter J.C."/>
            <person name="Glavina T."/>
            <person name="Hammon N."/>
            <person name="Israni S."/>
            <person name="Pitluck S."/>
            <person name="Chain P."/>
            <person name="Malfatti S."/>
            <person name="Shin M."/>
            <person name="Vergez L."/>
            <person name="Schmutz J."/>
            <person name="Larimer F."/>
            <person name="Land M."/>
            <person name="Kyrpides N."/>
            <person name="Ivanova N."/>
            <person name="Fredrickson J."/>
            <person name="Balkwill D."/>
            <person name="Romine M.F."/>
            <person name="Richardson P."/>
        </authorList>
    </citation>
    <scope>NUCLEOTIDE SEQUENCE [LARGE SCALE GENOMIC DNA]</scope>
    <source>
        <strain>ATCC 700278 / DSM 12444 / CCUG 56034 / CIP 105152 / NBRC 16084 / F199</strain>
    </source>
</reference>
<protein>
    <recommendedName>
        <fullName evidence="1">7-cyano-7-deazaguanine synthase</fullName>
        <ecNumber evidence="1">6.3.4.20</ecNumber>
    </recommendedName>
    <alternativeName>
        <fullName evidence="1">7-cyano-7-carbaguanine synthase</fullName>
    </alternativeName>
    <alternativeName>
        <fullName evidence="1">PreQ(0) synthase</fullName>
    </alternativeName>
    <alternativeName>
        <fullName evidence="1">Queuosine biosynthesis protein QueC</fullName>
    </alternativeName>
</protein>
<keyword id="KW-0067">ATP-binding</keyword>
<keyword id="KW-0436">Ligase</keyword>
<keyword id="KW-0479">Metal-binding</keyword>
<keyword id="KW-0547">Nucleotide-binding</keyword>
<keyword id="KW-0671">Queuosine biosynthesis</keyword>
<keyword id="KW-1185">Reference proteome</keyword>
<keyword id="KW-0862">Zinc</keyword>
<gene>
    <name evidence="1" type="primary">queC</name>
    <name type="ordered locus">Saro_3137</name>
</gene>
<comment type="function">
    <text evidence="1">Catalyzes the ATP-dependent conversion of 7-carboxy-7-deazaguanine (CDG) to 7-cyano-7-deazaguanine (preQ(0)).</text>
</comment>
<comment type="catalytic activity">
    <reaction evidence="1">
        <text>7-carboxy-7-deazaguanine + NH4(+) + ATP = 7-cyano-7-deazaguanine + ADP + phosphate + H2O + H(+)</text>
        <dbReference type="Rhea" id="RHEA:27982"/>
        <dbReference type="ChEBI" id="CHEBI:15377"/>
        <dbReference type="ChEBI" id="CHEBI:15378"/>
        <dbReference type="ChEBI" id="CHEBI:28938"/>
        <dbReference type="ChEBI" id="CHEBI:30616"/>
        <dbReference type="ChEBI" id="CHEBI:43474"/>
        <dbReference type="ChEBI" id="CHEBI:45075"/>
        <dbReference type="ChEBI" id="CHEBI:61036"/>
        <dbReference type="ChEBI" id="CHEBI:456216"/>
        <dbReference type="EC" id="6.3.4.20"/>
    </reaction>
</comment>
<comment type="cofactor">
    <cofactor evidence="1">
        <name>Zn(2+)</name>
        <dbReference type="ChEBI" id="CHEBI:29105"/>
    </cofactor>
    <text evidence="1">Binds 1 zinc ion per subunit.</text>
</comment>
<comment type="pathway">
    <text evidence="1">Purine metabolism; 7-cyano-7-deazaguanine biosynthesis.</text>
</comment>
<comment type="similarity">
    <text evidence="1">Belongs to the QueC family.</text>
</comment>
<name>QUEC_NOVAD</name>
<dbReference type="EC" id="6.3.4.20" evidence="1"/>
<dbReference type="EMBL" id="CP000248">
    <property type="protein sequence ID" value="ABD27572.1"/>
    <property type="molecule type" value="Genomic_DNA"/>
</dbReference>
<dbReference type="RefSeq" id="WP_011446776.1">
    <property type="nucleotide sequence ID" value="NC_007794.1"/>
</dbReference>
<dbReference type="SMR" id="Q2G3K1"/>
<dbReference type="STRING" id="279238.Saro_3137"/>
<dbReference type="KEGG" id="nar:Saro_3137"/>
<dbReference type="eggNOG" id="COG0603">
    <property type="taxonomic scope" value="Bacteria"/>
</dbReference>
<dbReference type="HOGENOM" id="CLU_081854_1_1_5"/>
<dbReference type="UniPathway" id="UPA00391"/>
<dbReference type="Proteomes" id="UP000009134">
    <property type="component" value="Chromosome"/>
</dbReference>
<dbReference type="GO" id="GO:0005524">
    <property type="term" value="F:ATP binding"/>
    <property type="evidence" value="ECO:0007669"/>
    <property type="project" value="UniProtKB-UniRule"/>
</dbReference>
<dbReference type="GO" id="GO:0016879">
    <property type="term" value="F:ligase activity, forming carbon-nitrogen bonds"/>
    <property type="evidence" value="ECO:0007669"/>
    <property type="project" value="UniProtKB-UniRule"/>
</dbReference>
<dbReference type="GO" id="GO:0008270">
    <property type="term" value="F:zinc ion binding"/>
    <property type="evidence" value="ECO:0007669"/>
    <property type="project" value="UniProtKB-UniRule"/>
</dbReference>
<dbReference type="GO" id="GO:0008616">
    <property type="term" value="P:queuosine biosynthetic process"/>
    <property type="evidence" value="ECO:0007669"/>
    <property type="project" value="UniProtKB-UniRule"/>
</dbReference>
<dbReference type="CDD" id="cd01995">
    <property type="entry name" value="QueC-like"/>
    <property type="match status" value="1"/>
</dbReference>
<dbReference type="Gene3D" id="3.40.50.620">
    <property type="entry name" value="HUPs"/>
    <property type="match status" value="1"/>
</dbReference>
<dbReference type="HAMAP" id="MF_01633">
    <property type="entry name" value="QueC"/>
    <property type="match status" value="1"/>
</dbReference>
<dbReference type="InterPro" id="IPR018317">
    <property type="entry name" value="QueC"/>
</dbReference>
<dbReference type="InterPro" id="IPR014729">
    <property type="entry name" value="Rossmann-like_a/b/a_fold"/>
</dbReference>
<dbReference type="NCBIfam" id="TIGR00364">
    <property type="entry name" value="7-cyano-7-deazaguanine synthase QueC"/>
    <property type="match status" value="1"/>
</dbReference>
<dbReference type="PANTHER" id="PTHR42914">
    <property type="entry name" value="7-CYANO-7-DEAZAGUANINE SYNTHASE"/>
    <property type="match status" value="1"/>
</dbReference>
<dbReference type="PANTHER" id="PTHR42914:SF1">
    <property type="entry name" value="7-CYANO-7-DEAZAGUANINE SYNTHASE"/>
    <property type="match status" value="1"/>
</dbReference>
<dbReference type="Pfam" id="PF06508">
    <property type="entry name" value="QueC"/>
    <property type="match status" value="1"/>
</dbReference>
<dbReference type="PIRSF" id="PIRSF006293">
    <property type="entry name" value="ExsB"/>
    <property type="match status" value="1"/>
</dbReference>
<dbReference type="SUPFAM" id="SSF52402">
    <property type="entry name" value="Adenine nucleotide alpha hydrolases-like"/>
    <property type="match status" value="1"/>
</dbReference>
<proteinExistence type="inferred from homology"/>
<evidence type="ECO:0000255" key="1">
    <source>
        <dbReference type="HAMAP-Rule" id="MF_01633"/>
    </source>
</evidence>
<organism>
    <name type="scientific">Novosphingobium aromaticivorans (strain ATCC 700278 / DSM 12444 / CCUG 56034 / CIP 105152 / NBRC 16084 / F199)</name>
    <dbReference type="NCBI Taxonomy" id="279238"/>
    <lineage>
        <taxon>Bacteria</taxon>
        <taxon>Pseudomonadati</taxon>
        <taxon>Pseudomonadota</taxon>
        <taxon>Alphaproteobacteria</taxon>
        <taxon>Sphingomonadales</taxon>
        <taxon>Sphingomonadaceae</taxon>
        <taxon>Novosphingobium</taxon>
    </lineage>
</organism>
<accession>Q2G3K1</accession>
<feature type="chain" id="PRO_0000246870" description="7-cyano-7-deazaguanine synthase">
    <location>
        <begin position="1"/>
        <end position="233"/>
    </location>
</feature>
<feature type="binding site" evidence="1">
    <location>
        <begin position="17"/>
        <end position="27"/>
    </location>
    <ligand>
        <name>ATP</name>
        <dbReference type="ChEBI" id="CHEBI:30616"/>
    </ligand>
</feature>
<feature type="binding site" evidence="1">
    <location>
        <position position="196"/>
    </location>
    <ligand>
        <name>Zn(2+)</name>
        <dbReference type="ChEBI" id="CHEBI:29105"/>
    </ligand>
</feature>
<feature type="binding site" evidence="1">
    <location>
        <position position="206"/>
    </location>
    <ligand>
        <name>Zn(2+)</name>
        <dbReference type="ChEBI" id="CHEBI:29105"/>
    </ligand>
</feature>
<feature type="binding site" evidence="1">
    <location>
        <position position="209"/>
    </location>
    <ligand>
        <name>Zn(2+)</name>
        <dbReference type="ChEBI" id="CHEBI:29105"/>
    </ligand>
</feature>
<feature type="binding site" evidence="1">
    <location>
        <position position="212"/>
    </location>
    <ligand>
        <name>Zn(2+)</name>
        <dbReference type="ChEBI" id="CHEBI:29105"/>
    </ligand>
</feature>
<sequence length="233" mass="24577">MPSNSPAPDAPLAVVLLSGGLDSMVCAGLAQEQGFRVLALTIDYNQRHRVELDAARAIAARLGVERHVILPLDLRQFGGSALTADIAVPKDGVGDDIPVTYVPARNLIFLSLALAWAEAAGSKDLFIGVNALDYSGYPDCRPEFVAGFEDLARIATKVGSEGGTVTVHAPLQHLKKSEIAREAARLGLEAGDSWSCYDPLPDGRACGVCDSCRLRRAGFEEAGLNDGTRYGGG</sequence>